<feature type="chain" id="PRO_0000340891" description="Gamma-glutamyl phosphate reductase">
    <location>
        <begin position="1"/>
        <end position="423"/>
    </location>
</feature>
<comment type="function">
    <text evidence="1">Catalyzes the NADPH-dependent reduction of L-glutamate 5-phosphate into L-glutamate 5-semialdehyde and phosphate. The product spontaneously undergoes cyclization to form 1-pyrroline-5-carboxylate.</text>
</comment>
<comment type="catalytic activity">
    <reaction evidence="1">
        <text>L-glutamate 5-semialdehyde + phosphate + NADP(+) = L-glutamyl 5-phosphate + NADPH + H(+)</text>
        <dbReference type="Rhea" id="RHEA:19541"/>
        <dbReference type="ChEBI" id="CHEBI:15378"/>
        <dbReference type="ChEBI" id="CHEBI:43474"/>
        <dbReference type="ChEBI" id="CHEBI:57783"/>
        <dbReference type="ChEBI" id="CHEBI:58066"/>
        <dbReference type="ChEBI" id="CHEBI:58274"/>
        <dbReference type="ChEBI" id="CHEBI:58349"/>
        <dbReference type="EC" id="1.2.1.41"/>
    </reaction>
</comment>
<comment type="pathway">
    <text evidence="1">Amino-acid biosynthesis; L-proline biosynthesis; L-glutamate 5-semialdehyde from L-glutamate: step 2/2.</text>
</comment>
<comment type="subcellular location">
    <subcellularLocation>
        <location evidence="1">Cytoplasm</location>
    </subcellularLocation>
</comment>
<comment type="similarity">
    <text evidence="1">Belongs to the gamma-glutamyl phosphate reductase family.</text>
</comment>
<gene>
    <name evidence="1" type="primary">proA</name>
    <name type="ordered locus">Mmc1_3348</name>
</gene>
<organism>
    <name type="scientific">Magnetococcus marinus (strain ATCC BAA-1437 / JCM 17883 / MC-1)</name>
    <dbReference type="NCBI Taxonomy" id="156889"/>
    <lineage>
        <taxon>Bacteria</taxon>
        <taxon>Pseudomonadati</taxon>
        <taxon>Pseudomonadota</taxon>
        <taxon>Alphaproteobacteria</taxon>
        <taxon>Magnetococcales</taxon>
        <taxon>Magnetococcaceae</taxon>
        <taxon>Magnetococcus</taxon>
    </lineage>
</organism>
<dbReference type="EC" id="1.2.1.41" evidence="1"/>
<dbReference type="EMBL" id="CP000471">
    <property type="protein sequence ID" value="ABK45834.1"/>
    <property type="molecule type" value="Genomic_DNA"/>
</dbReference>
<dbReference type="RefSeq" id="WP_011714893.1">
    <property type="nucleotide sequence ID" value="NC_008576.1"/>
</dbReference>
<dbReference type="SMR" id="A0LCZ1"/>
<dbReference type="STRING" id="156889.Mmc1_3348"/>
<dbReference type="KEGG" id="mgm:Mmc1_3348"/>
<dbReference type="eggNOG" id="COG0014">
    <property type="taxonomic scope" value="Bacteria"/>
</dbReference>
<dbReference type="HOGENOM" id="CLU_030231_0_0_5"/>
<dbReference type="OrthoDB" id="9809970at2"/>
<dbReference type="UniPathway" id="UPA00098">
    <property type="reaction ID" value="UER00360"/>
</dbReference>
<dbReference type="Proteomes" id="UP000002586">
    <property type="component" value="Chromosome"/>
</dbReference>
<dbReference type="GO" id="GO:0005737">
    <property type="term" value="C:cytoplasm"/>
    <property type="evidence" value="ECO:0007669"/>
    <property type="project" value="UniProtKB-SubCell"/>
</dbReference>
<dbReference type="GO" id="GO:0004350">
    <property type="term" value="F:glutamate-5-semialdehyde dehydrogenase activity"/>
    <property type="evidence" value="ECO:0007669"/>
    <property type="project" value="UniProtKB-UniRule"/>
</dbReference>
<dbReference type="GO" id="GO:0050661">
    <property type="term" value="F:NADP binding"/>
    <property type="evidence" value="ECO:0007669"/>
    <property type="project" value="InterPro"/>
</dbReference>
<dbReference type="GO" id="GO:0055129">
    <property type="term" value="P:L-proline biosynthetic process"/>
    <property type="evidence" value="ECO:0007669"/>
    <property type="project" value="UniProtKB-UniRule"/>
</dbReference>
<dbReference type="CDD" id="cd07079">
    <property type="entry name" value="ALDH_F18-19_ProA-GPR"/>
    <property type="match status" value="1"/>
</dbReference>
<dbReference type="FunFam" id="3.40.309.10:FF:000006">
    <property type="entry name" value="Gamma-glutamyl phosphate reductase"/>
    <property type="match status" value="1"/>
</dbReference>
<dbReference type="Gene3D" id="3.40.605.10">
    <property type="entry name" value="Aldehyde Dehydrogenase, Chain A, domain 1"/>
    <property type="match status" value="1"/>
</dbReference>
<dbReference type="Gene3D" id="3.40.309.10">
    <property type="entry name" value="Aldehyde Dehydrogenase, Chain A, domain 2"/>
    <property type="match status" value="1"/>
</dbReference>
<dbReference type="HAMAP" id="MF_00412">
    <property type="entry name" value="ProA"/>
    <property type="match status" value="1"/>
</dbReference>
<dbReference type="InterPro" id="IPR016161">
    <property type="entry name" value="Ald_DH/histidinol_DH"/>
</dbReference>
<dbReference type="InterPro" id="IPR016163">
    <property type="entry name" value="Ald_DH_C"/>
</dbReference>
<dbReference type="InterPro" id="IPR016162">
    <property type="entry name" value="Ald_DH_N"/>
</dbReference>
<dbReference type="InterPro" id="IPR015590">
    <property type="entry name" value="Aldehyde_DH_dom"/>
</dbReference>
<dbReference type="InterPro" id="IPR020593">
    <property type="entry name" value="G-glutamylP_reductase_CS"/>
</dbReference>
<dbReference type="InterPro" id="IPR012134">
    <property type="entry name" value="Glu-5-SA_DH"/>
</dbReference>
<dbReference type="InterPro" id="IPR000965">
    <property type="entry name" value="GPR_dom"/>
</dbReference>
<dbReference type="NCBIfam" id="NF001221">
    <property type="entry name" value="PRK00197.1"/>
    <property type="match status" value="1"/>
</dbReference>
<dbReference type="NCBIfam" id="TIGR00407">
    <property type="entry name" value="proA"/>
    <property type="match status" value="1"/>
</dbReference>
<dbReference type="PANTHER" id="PTHR11063:SF8">
    <property type="entry name" value="DELTA-1-PYRROLINE-5-CARBOXYLATE SYNTHASE"/>
    <property type="match status" value="1"/>
</dbReference>
<dbReference type="PANTHER" id="PTHR11063">
    <property type="entry name" value="GLUTAMATE SEMIALDEHYDE DEHYDROGENASE"/>
    <property type="match status" value="1"/>
</dbReference>
<dbReference type="Pfam" id="PF00171">
    <property type="entry name" value="Aldedh"/>
    <property type="match status" value="2"/>
</dbReference>
<dbReference type="PIRSF" id="PIRSF000151">
    <property type="entry name" value="GPR"/>
    <property type="match status" value="1"/>
</dbReference>
<dbReference type="SUPFAM" id="SSF53720">
    <property type="entry name" value="ALDH-like"/>
    <property type="match status" value="1"/>
</dbReference>
<dbReference type="PROSITE" id="PS01223">
    <property type="entry name" value="PROA"/>
    <property type="match status" value="1"/>
</dbReference>
<protein>
    <recommendedName>
        <fullName evidence="1">Gamma-glutamyl phosphate reductase</fullName>
        <shortName evidence="1">GPR</shortName>
        <ecNumber evidence="1">1.2.1.41</ecNumber>
    </recommendedName>
    <alternativeName>
        <fullName evidence="1">Glutamate-5-semialdehyde dehydrogenase</fullName>
    </alternativeName>
    <alternativeName>
        <fullName evidence="1">Glutamyl-gamma-semialdehyde dehydrogenase</fullName>
        <shortName evidence="1">GSA dehydrogenase</shortName>
    </alternativeName>
</protein>
<reference key="1">
    <citation type="journal article" date="2009" name="Appl. Environ. Microbiol.">
        <title>Complete genome sequence of the chemolithoautotrophic marine magnetotactic coccus strain MC-1.</title>
        <authorList>
            <person name="Schubbe S."/>
            <person name="Williams T.J."/>
            <person name="Xie G."/>
            <person name="Kiss H.E."/>
            <person name="Brettin T.S."/>
            <person name="Martinez D."/>
            <person name="Ross C.A."/>
            <person name="Schuler D."/>
            <person name="Cox B.L."/>
            <person name="Nealson K.H."/>
            <person name="Bazylinski D.A."/>
        </authorList>
    </citation>
    <scope>NUCLEOTIDE SEQUENCE [LARGE SCALE GENOMIC DNA]</scope>
    <source>
        <strain>ATCC BAA-1437 / JCM 17883 / MC-1</strain>
    </source>
</reference>
<name>PROA_MAGMM</name>
<keyword id="KW-0028">Amino-acid biosynthesis</keyword>
<keyword id="KW-0963">Cytoplasm</keyword>
<keyword id="KW-0521">NADP</keyword>
<keyword id="KW-0560">Oxidoreductase</keyword>
<keyword id="KW-0641">Proline biosynthesis</keyword>
<keyword id="KW-1185">Reference proteome</keyword>
<evidence type="ECO:0000255" key="1">
    <source>
        <dbReference type="HAMAP-Rule" id="MF_00412"/>
    </source>
</evidence>
<accession>A0LCZ1</accession>
<proteinExistence type="inferred from homology"/>
<sequence>MSNDSIKLIDEIGKKARKAARQLAWLDSGSKNATLHAMADALIACKKILQVENEKDLEAGEKNGLTDAMLDRLRLTDQVIASMAEGIRQVAALPDPIGEINHMRRLANQLQVGKMRVPLGVIGIIYESRPNVTADAAALCVKSGNAVILRGGSEAFHSNRAIAAALAQGMEKGRVPSDAVQVVSTTDRAAVSALLKADQYVDIIIPRGGKGLIQRVMDEATIPVIKHLDGICHTYIDADADPAKAIDITFNGKMQRTGVCNATETLLIHEKVAKTILPALAKRLNQADCVLRGCPETIRLVGEVAPVIPATEEDWDTEYLAAILAIRVVKNLEEAMDHIDAHSSRHTEVIVTENHATAMRFVREVDASAVMVNASSRFNDGFQFGLGAEMGISTDKLHVRGPVGLEGLTCEKWIVLGDGQLRS</sequence>